<feature type="chain" id="PRO_0000204834" description="Nucleoporin nup107">
    <location>
        <begin position="1"/>
        <end position="813"/>
    </location>
</feature>
<keyword id="KW-0963">Cytoplasm</keyword>
<keyword id="KW-0472">Membrane</keyword>
<keyword id="KW-0509">mRNA transport</keyword>
<keyword id="KW-0906">Nuclear pore complex</keyword>
<keyword id="KW-0539">Nucleus</keyword>
<keyword id="KW-0653">Protein transport</keyword>
<keyword id="KW-1185">Reference proteome</keyword>
<keyword id="KW-0811">Translocation</keyword>
<keyword id="KW-0813">Transport</keyword>
<comment type="function">
    <text evidence="2">Functions as a component of the nuclear pore complex (NPC). NPC components, collectively referred to as nucleoporins (NUPs), can play the role of both NPC structural components and of docking or interaction partners for transiently associated nuclear transport factors. Active directional transport is assured by both, a Phe-Gly (FG) repeat affinity gradient for these transport factors across the NPC and a transport cofactor concentration gradient across the nuclear envelope.</text>
</comment>
<comment type="subunit">
    <text evidence="3">Component of the npc107-120 complex which consists of nup85, nup107, nup120, nup131, nup132 and seh1. Interacts with nup120, nup131 and nup132.</text>
</comment>
<comment type="interaction">
    <interactant intactId="EBI-295788">
        <id>Q10331</id>
    </interactant>
    <interactant intactId="EBI-295769">
        <id>Q9P797</id>
        <label>nup131</label>
    </interactant>
    <organismsDiffer>false</organismsDiffer>
    <experiments>2</experiments>
</comment>
<comment type="interaction">
    <interactant intactId="EBI-295788">
        <id>Q10331</id>
    </interactant>
    <interactant intactId="EBI-295780">
        <id>Q9UTH0</id>
        <label>nup132</label>
    </interactant>
    <organismsDiffer>false</organismsDiffer>
    <experiments>2</experiments>
</comment>
<comment type="subcellular location">
    <subcellularLocation>
        <location evidence="4">Cytoplasm</location>
    </subcellularLocation>
    <subcellularLocation>
        <location evidence="3">Nucleus membrane</location>
    </subcellularLocation>
    <subcellularLocation>
        <location evidence="1 3">Nucleus</location>
        <location evidence="1 3">Nuclear pore complex</location>
    </subcellularLocation>
</comment>
<comment type="similarity">
    <text evidence="5">Belongs to the nucleoporin Nup84/Nup107 family.</text>
</comment>
<dbReference type="EMBL" id="CU329671">
    <property type="protein sequence ID" value="CAE54931.2"/>
    <property type="molecule type" value="Genomic_DNA"/>
</dbReference>
<dbReference type="RefSeq" id="NP_001018780.2">
    <property type="nucleotide sequence ID" value="NM_001021087.2"/>
</dbReference>
<dbReference type="SMR" id="Q10331"/>
<dbReference type="BioGRID" id="280331">
    <property type="interactions" value="3"/>
</dbReference>
<dbReference type="FunCoup" id="Q10331">
    <property type="interactions" value="686"/>
</dbReference>
<dbReference type="IntAct" id="Q10331">
    <property type="interactions" value="2"/>
</dbReference>
<dbReference type="STRING" id="284812.Q10331"/>
<dbReference type="iPTMnet" id="Q10331"/>
<dbReference type="PaxDb" id="4896-SPBC428.01c.1"/>
<dbReference type="EnsemblFungi" id="SPBC428.01c.1">
    <property type="protein sequence ID" value="SPBC428.01c.1:pep"/>
    <property type="gene ID" value="SPBC428.01c"/>
</dbReference>
<dbReference type="GeneID" id="3361255"/>
<dbReference type="KEGG" id="spo:3361255"/>
<dbReference type="PomBase" id="SPBC428.01c">
    <property type="gene designation" value="nup107"/>
</dbReference>
<dbReference type="VEuPathDB" id="FungiDB:SPBC428.01c"/>
<dbReference type="eggNOG" id="KOG1964">
    <property type="taxonomic scope" value="Eukaryota"/>
</dbReference>
<dbReference type="HOGENOM" id="CLU_012944_0_0_1"/>
<dbReference type="InParanoid" id="Q10331"/>
<dbReference type="OMA" id="MAHIVLF"/>
<dbReference type="Reactome" id="R-SPO-159227">
    <property type="pathway name" value="Transport of the SLBP independent Mature mRNA"/>
</dbReference>
<dbReference type="Reactome" id="R-SPO-159231">
    <property type="pathway name" value="Transport of Mature mRNA Derived from an Intronless Transcript"/>
</dbReference>
<dbReference type="Reactome" id="R-SPO-159236">
    <property type="pathway name" value="Transport of Mature mRNA derived from an Intron-Containing Transcript"/>
</dbReference>
<dbReference type="Reactome" id="R-SPO-3371453">
    <property type="pathway name" value="Regulation of HSF1-mediated heat shock response"/>
</dbReference>
<dbReference type="Reactome" id="R-SPO-4085377">
    <property type="pathway name" value="SUMOylation of SUMOylation proteins"/>
</dbReference>
<dbReference type="Reactome" id="R-SPO-4551638">
    <property type="pathway name" value="SUMOylation of chromatin organization proteins"/>
</dbReference>
<dbReference type="Reactome" id="R-SPO-4570464">
    <property type="pathway name" value="SUMOylation of RNA binding proteins"/>
</dbReference>
<dbReference type="Reactome" id="R-SPO-5578749">
    <property type="pathway name" value="Transcriptional regulation by small RNAs"/>
</dbReference>
<dbReference type="Reactome" id="R-SPO-9615933">
    <property type="pathway name" value="Postmitotic nuclear pore complex (NPC) reformation"/>
</dbReference>
<dbReference type="PRO" id="PR:Q10331"/>
<dbReference type="Proteomes" id="UP000002485">
    <property type="component" value="Chromosome II"/>
</dbReference>
<dbReference type="GO" id="GO:0005829">
    <property type="term" value="C:cytosol"/>
    <property type="evidence" value="ECO:0007005"/>
    <property type="project" value="PomBase"/>
</dbReference>
<dbReference type="GO" id="GO:0140599">
    <property type="term" value="C:mitotic nuclear bridge midzone membrane domain"/>
    <property type="evidence" value="ECO:0000314"/>
    <property type="project" value="PomBase"/>
</dbReference>
<dbReference type="GO" id="GO:0031965">
    <property type="term" value="C:nuclear membrane"/>
    <property type="evidence" value="ECO:0007669"/>
    <property type="project" value="UniProtKB-SubCell"/>
</dbReference>
<dbReference type="GO" id="GO:0034399">
    <property type="term" value="C:nuclear periphery"/>
    <property type="evidence" value="ECO:0000314"/>
    <property type="project" value="PomBase"/>
</dbReference>
<dbReference type="GO" id="GO:0005643">
    <property type="term" value="C:nuclear pore"/>
    <property type="evidence" value="ECO:0000314"/>
    <property type="project" value="PomBase"/>
</dbReference>
<dbReference type="GO" id="GO:0031080">
    <property type="term" value="C:nuclear pore outer ring"/>
    <property type="evidence" value="ECO:0000314"/>
    <property type="project" value="PomBase"/>
</dbReference>
<dbReference type="GO" id="GO:0005634">
    <property type="term" value="C:nucleus"/>
    <property type="evidence" value="ECO:0007005"/>
    <property type="project" value="PomBase"/>
</dbReference>
<dbReference type="GO" id="GO:0017056">
    <property type="term" value="F:structural constituent of nuclear pore"/>
    <property type="evidence" value="ECO:0000318"/>
    <property type="project" value="GO_Central"/>
</dbReference>
<dbReference type="GO" id="GO:0006406">
    <property type="term" value="P:mRNA export from nucleus"/>
    <property type="evidence" value="ECO:0000318"/>
    <property type="project" value="GO_Central"/>
</dbReference>
<dbReference type="GO" id="GO:0016973">
    <property type="term" value="P:poly(A)+ mRNA export from nucleus"/>
    <property type="evidence" value="ECO:0000315"/>
    <property type="project" value="PomBase"/>
</dbReference>
<dbReference type="GO" id="GO:0000973">
    <property type="term" value="P:post-transcriptional tethering of RNA polymerase II gene DNA at nuclear periphery"/>
    <property type="evidence" value="ECO:0000318"/>
    <property type="project" value="GO_Central"/>
</dbReference>
<dbReference type="GO" id="GO:0006606">
    <property type="term" value="P:protein import into nucleus"/>
    <property type="evidence" value="ECO:0000318"/>
    <property type="project" value="GO_Central"/>
</dbReference>
<dbReference type="GO" id="GO:0000054">
    <property type="term" value="P:ribosomal subunit export from nucleus"/>
    <property type="evidence" value="ECO:0000266"/>
    <property type="project" value="PomBase"/>
</dbReference>
<dbReference type="FunFam" id="1.10.3450.20:FF:000001">
    <property type="entry name" value="Nuclear pore complex protein"/>
    <property type="match status" value="1"/>
</dbReference>
<dbReference type="Gene3D" id="1.10.3450.20">
    <property type="match status" value="1"/>
</dbReference>
<dbReference type="Gene3D" id="1.20.190.50">
    <property type="match status" value="1"/>
</dbReference>
<dbReference type="InterPro" id="IPR007252">
    <property type="entry name" value="Nup84/Nup107"/>
</dbReference>
<dbReference type="PANTHER" id="PTHR13003:SF2">
    <property type="entry name" value="NUCLEAR PORE COMPLEX PROTEIN NUP107"/>
    <property type="match status" value="1"/>
</dbReference>
<dbReference type="PANTHER" id="PTHR13003">
    <property type="entry name" value="NUP107-RELATED"/>
    <property type="match status" value="1"/>
</dbReference>
<dbReference type="Pfam" id="PF04121">
    <property type="entry name" value="Nup84_Nup100"/>
    <property type="match status" value="1"/>
</dbReference>
<sequence>MACCCYSTILTHTRLDFKTMHQNALNNATLNVLGHKKNGSSSIQELIEMDEEEAEMNQNVVCIGPNETAVSVELGDEYEKFNIITSLKKDNLFSKDGLLYAYYELCQEKFEKCLKEDDEEWIELWDLESRTWDLIQRLYSFRLSEQQGHIQSHAFSSRAVLEEEYYSQNPEAFENNIVFNWARDNSSDPPSIEIRGNRWFYTREDIKMKNRGGSRFSSNISGTIVSNLDPDADIRDDKRLDERDDNFERQFFHTAFCLFRSGSFEELLELCRRTGNHWRSASLQGILEYRDNLIDDVLQSETSGNKRKELLRRSCLALTKNKRIDSYERALYGALCGDLNSVLDVCTTWEDAMWAYYNSMTQYNLDVYLSSKAPQTETQLPPVDSGLGLTPELIFNSLSNSSIASIQEEASHPLIKLQTHIICNKISEILSSAHIQLEAIRTGNAPESGDLVTPPLLRILTHIILFLKISGLAVDEYTSDSIIQAYIELLASAKKVNLVPLYIQYLSNQVQYEAYSRFLILVDEESARSEQLQLAKKYSLDINHAALLAVEYVYDEVVSVSPEEVHTVYLKSIEEPVEPSYKKLICTLEWLLITSQTDELLRFANLVYRFFLSIGELNSAYDLYTHIPSDALNTLSSSDGEPENDSKFRDAYELMNYRALCRALKFYQEWEELSKQEVFEDSAVTKASTSYKVWKKKLNFASRKCVKSFTDLLQANWLHPSTLELKPDDDPLLYKTLMTIRNLYVPELILGLHNVYFSLEDYDSCFALANEVASEDLKLYHCLIKSGRLVEYVSYLGKAGECSLSTPNGLFSL</sequence>
<accession>Q10331</accession>
<accession>O94351</accession>
<proteinExistence type="evidence at protein level"/>
<reference key="1">
    <citation type="journal article" date="2002" name="Nature">
        <title>The genome sequence of Schizosaccharomyces pombe.</title>
        <authorList>
            <person name="Wood V."/>
            <person name="Gwilliam R."/>
            <person name="Rajandream M.A."/>
            <person name="Lyne M.H."/>
            <person name="Lyne R."/>
            <person name="Stewart A."/>
            <person name="Sgouros J.G."/>
            <person name="Peat N."/>
            <person name="Hayles J."/>
            <person name="Baker S.G."/>
            <person name="Basham D."/>
            <person name="Bowman S."/>
            <person name="Brooks K."/>
            <person name="Brown D."/>
            <person name="Brown S."/>
            <person name="Chillingworth T."/>
            <person name="Churcher C.M."/>
            <person name="Collins M."/>
            <person name="Connor R."/>
            <person name="Cronin A."/>
            <person name="Davis P."/>
            <person name="Feltwell T."/>
            <person name="Fraser A."/>
            <person name="Gentles S."/>
            <person name="Goble A."/>
            <person name="Hamlin N."/>
            <person name="Harris D.E."/>
            <person name="Hidalgo J."/>
            <person name="Hodgson G."/>
            <person name="Holroyd S."/>
            <person name="Hornsby T."/>
            <person name="Howarth S."/>
            <person name="Huckle E.J."/>
            <person name="Hunt S."/>
            <person name="Jagels K."/>
            <person name="James K.D."/>
            <person name="Jones L."/>
            <person name="Jones M."/>
            <person name="Leather S."/>
            <person name="McDonald S."/>
            <person name="McLean J."/>
            <person name="Mooney P."/>
            <person name="Moule S."/>
            <person name="Mungall K.L."/>
            <person name="Murphy L.D."/>
            <person name="Niblett D."/>
            <person name="Odell C."/>
            <person name="Oliver K."/>
            <person name="O'Neil S."/>
            <person name="Pearson D."/>
            <person name="Quail M.A."/>
            <person name="Rabbinowitsch E."/>
            <person name="Rutherford K.M."/>
            <person name="Rutter S."/>
            <person name="Saunders D."/>
            <person name="Seeger K."/>
            <person name="Sharp S."/>
            <person name="Skelton J."/>
            <person name="Simmonds M.N."/>
            <person name="Squares R."/>
            <person name="Squares S."/>
            <person name="Stevens K."/>
            <person name="Taylor K."/>
            <person name="Taylor R.G."/>
            <person name="Tivey A."/>
            <person name="Walsh S.V."/>
            <person name="Warren T."/>
            <person name="Whitehead S."/>
            <person name="Woodward J.R."/>
            <person name="Volckaert G."/>
            <person name="Aert R."/>
            <person name="Robben J."/>
            <person name="Grymonprez B."/>
            <person name="Weltjens I."/>
            <person name="Vanstreels E."/>
            <person name="Rieger M."/>
            <person name="Schaefer M."/>
            <person name="Mueller-Auer S."/>
            <person name="Gabel C."/>
            <person name="Fuchs M."/>
            <person name="Duesterhoeft A."/>
            <person name="Fritzc C."/>
            <person name="Holzer E."/>
            <person name="Moestl D."/>
            <person name="Hilbert H."/>
            <person name="Borzym K."/>
            <person name="Langer I."/>
            <person name="Beck A."/>
            <person name="Lehrach H."/>
            <person name="Reinhardt R."/>
            <person name="Pohl T.M."/>
            <person name="Eger P."/>
            <person name="Zimmermann W."/>
            <person name="Wedler H."/>
            <person name="Wambutt R."/>
            <person name="Purnelle B."/>
            <person name="Goffeau A."/>
            <person name="Cadieu E."/>
            <person name="Dreano S."/>
            <person name="Gloux S."/>
            <person name="Lelaure V."/>
            <person name="Mottier S."/>
            <person name="Galibert F."/>
            <person name="Aves S.J."/>
            <person name="Xiang Z."/>
            <person name="Hunt C."/>
            <person name="Moore K."/>
            <person name="Hurst S.M."/>
            <person name="Lucas M."/>
            <person name="Rochet M."/>
            <person name="Gaillardin C."/>
            <person name="Tallada V.A."/>
            <person name="Garzon A."/>
            <person name="Thode G."/>
            <person name="Daga R.R."/>
            <person name="Cruzado L."/>
            <person name="Jimenez J."/>
            <person name="Sanchez M."/>
            <person name="del Rey F."/>
            <person name="Benito J."/>
            <person name="Dominguez A."/>
            <person name="Revuelta J.L."/>
            <person name="Moreno S."/>
            <person name="Armstrong J."/>
            <person name="Forsburg S.L."/>
            <person name="Cerutti L."/>
            <person name="Lowe T."/>
            <person name="McCombie W.R."/>
            <person name="Paulsen I."/>
            <person name="Potashkin J."/>
            <person name="Shpakovski G.V."/>
            <person name="Ussery D."/>
            <person name="Barrell B.G."/>
            <person name="Nurse P."/>
        </authorList>
    </citation>
    <scope>NUCLEOTIDE SEQUENCE [LARGE SCALE GENOMIC DNA]</scope>
    <source>
        <strain>972 / ATCC 24843</strain>
    </source>
</reference>
<reference key="2">
    <citation type="journal article" date="2011" name="Science">
        <title>Comparative functional genomics of the fission yeasts.</title>
        <authorList>
            <person name="Rhind N."/>
            <person name="Chen Z."/>
            <person name="Yassour M."/>
            <person name="Thompson D.A."/>
            <person name="Haas B.J."/>
            <person name="Habib N."/>
            <person name="Wapinski I."/>
            <person name="Roy S."/>
            <person name="Lin M.F."/>
            <person name="Heiman D.I."/>
            <person name="Young S.K."/>
            <person name="Furuya K."/>
            <person name="Guo Y."/>
            <person name="Pidoux A."/>
            <person name="Chen H.M."/>
            <person name="Robbertse B."/>
            <person name="Goldberg J.M."/>
            <person name="Aoki K."/>
            <person name="Bayne E.H."/>
            <person name="Berlin A.M."/>
            <person name="Desjardins C.A."/>
            <person name="Dobbs E."/>
            <person name="Dukaj L."/>
            <person name="Fan L."/>
            <person name="FitzGerald M.G."/>
            <person name="French C."/>
            <person name="Gujja S."/>
            <person name="Hansen K."/>
            <person name="Keifenheim D."/>
            <person name="Levin J.Z."/>
            <person name="Mosher R.A."/>
            <person name="Mueller C.A."/>
            <person name="Pfiffner J."/>
            <person name="Priest M."/>
            <person name="Russ C."/>
            <person name="Smialowska A."/>
            <person name="Swoboda P."/>
            <person name="Sykes S.M."/>
            <person name="Vaughn M."/>
            <person name="Vengrova S."/>
            <person name="Yoder R."/>
            <person name="Zeng Q."/>
            <person name="Allshire R."/>
            <person name="Baulcombe D."/>
            <person name="Birren B.W."/>
            <person name="Brown W."/>
            <person name="Ekwall K."/>
            <person name="Kellis M."/>
            <person name="Leatherwood J."/>
            <person name="Levin H."/>
            <person name="Margalit H."/>
            <person name="Martienssen R."/>
            <person name="Nieduszynski C.A."/>
            <person name="Spatafora J.W."/>
            <person name="Friedman N."/>
            <person name="Dalgaard J.Z."/>
            <person name="Baumann P."/>
            <person name="Niki H."/>
            <person name="Regev A."/>
            <person name="Nusbaum C."/>
        </authorList>
    </citation>
    <scope>REVISION OF GENE MODEL</scope>
</reference>
<reference key="3">
    <citation type="journal article" date="2001" name="J. Cell Biol.">
        <title>A mechanism for nuclear positioning in fission yeast based on microtubule pushing.</title>
        <authorList>
            <person name="Tran P.T."/>
            <person name="Marsh L."/>
            <person name="Doye V."/>
            <person name="Inoue S."/>
            <person name="Chang F."/>
        </authorList>
    </citation>
    <scope>IDENTIFICATION</scope>
    <scope>SUBCELLULAR LOCATION</scope>
</reference>
<reference key="4">
    <citation type="journal article" date="2003" name="Genome Res.">
        <title>Schizosaccharomyces pombe essential genes: a pilot study.</title>
        <authorList>
            <person name="Decottignies A."/>
            <person name="Sanchez-Perez I."/>
            <person name="Nurse P."/>
        </authorList>
    </citation>
    <scope>FUNCTION</scope>
</reference>
<reference key="5">
    <citation type="journal article" date="2004" name="Mol. Cell. Biol.">
        <title>The fission yeast Nup107-120 complex functionally interacts with the small GTPase Ran/Spi1 and is required for mRNA export, nuclear pore distribution, and proper cell division.</title>
        <authorList>
            <person name="Bai S.W."/>
            <person name="Rouquette J."/>
            <person name="Umeda M."/>
            <person name="Faigle W."/>
            <person name="Loew D."/>
            <person name="Sazer S."/>
            <person name="Doye V."/>
        </authorList>
    </citation>
    <scope>IDENTIFICATION IN NUP107-120 COMPLEX</scope>
    <scope>INTERACTION WITH NUP120; NUP131 AND NUP132</scope>
    <scope>SUBCELLULAR LOCATION</scope>
</reference>
<reference key="6">
    <citation type="journal article" date="2006" name="Nat. Biotechnol.">
        <title>ORFeome cloning and global analysis of protein localization in the fission yeast Schizosaccharomyces pombe.</title>
        <authorList>
            <person name="Matsuyama A."/>
            <person name="Arai R."/>
            <person name="Yashiroda Y."/>
            <person name="Shirai A."/>
            <person name="Kamata A."/>
            <person name="Sekido S."/>
            <person name="Kobayashi Y."/>
            <person name="Hashimoto A."/>
            <person name="Hamamoto M."/>
            <person name="Hiraoka Y."/>
            <person name="Horinouchi S."/>
            <person name="Yoshida M."/>
        </authorList>
    </citation>
    <scope>SUBCELLULAR LOCATION [LARGE SCALE ANALYSIS]</scope>
</reference>
<evidence type="ECO:0000269" key="1">
    <source>
    </source>
</evidence>
<evidence type="ECO:0000269" key="2">
    <source>
    </source>
</evidence>
<evidence type="ECO:0000269" key="3">
    <source>
    </source>
</evidence>
<evidence type="ECO:0000269" key="4">
    <source>
    </source>
</evidence>
<evidence type="ECO:0000305" key="5"/>
<organism>
    <name type="scientific">Schizosaccharomyces pombe (strain 972 / ATCC 24843)</name>
    <name type="common">Fission yeast</name>
    <dbReference type="NCBI Taxonomy" id="284812"/>
    <lineage>
        <taxon>Eukaryota</taxon>
        <taxon>Fungi</taxon>
        <taxon>Dikarya</taxon>
        <taxon>Ascomycota</taxon>
        <taxon>Taphrinomycotina</taxon>
        <taxon>Schizosaccharomycetes</taxon>
        <taxon>Schizosaccharomycetales</taxon>
        <taxon>Schizosaccharomycetaceae</taxon>
        <taxon>Schizosaccharomyces</taxon>
    </lineage>
</organism>
<gene>
    <name type="primary">nup107</name>
    <name type="ORF">SPBC428.01c</name>
    <name type="ORF">SPBC582.11c</name>
</gene>
<protein>
    <recommendedName>
        <fullName>Nucleoporin nup107</fullName>
    </recommendedName>
    <alternativeName>
        <fullName>Nuclear pore protein nup107</fullName>
    </alternativeName>
</protein>
<name>NU107_SCHPO</name>